<accession>P23353</accession>
<evidence type="ECO:0000255" key="1">
    <source>
        <dbReference type="HAMAP-Rule" id="MF_00300"/>
    </source>
</evidence>
<comment type="function">
    <text evidence="1">Catalyzes the anti-1,4-elimination of the C-3 phosphate and the C-6 proR hydrogen from 5-enolpyruvylshikimate-3-phosphate (EPSP) to yield chorismate, which is the branch point compound that serves as the starting substrate for the three terminal pathways of aromatic amino acid biosynthesis. This reaction introduces a second double bond into the aromatic ring system.</text>
</comment>
<comment type="catalytic activity">
    <reaction evidence="1">
        <text>5-O-(1-carboxyvinyl)-3-phosphoshikimate = chorismate + phosphate</text>
        <dbReference type="Rhea" id="RHEA:21020"/>
        <dbReference type="ChEBI" id="CHEBI:29748"/>
        <dbReference type="ChEBI" id="CHEBI:43474"/>
        <dbReference type="ChEBI" id="CHEBI:57701"/>
        <dbReference type="EC" id="4.2.3.5"/>
    </reaction>
</comment>
<comment type="cofactor">
    <cofactor evidence="1">
        <name>FMNH2</name>
        <dbReference type="ChEBI" id="CHEBI:57618"/>
    </cofactor>
    <text evidence="1">Reduced FMN (FMNH(2)).</text>
</comment>
<comment type="pathway">
    <text evidence="1">Metabolic intermediate biosynthesis; chorismate biosynthesis; chorismate from D-erythrose 4-phosphate and phosphoenolpyruvate: step 7/7.</text>
</comment>
<comment type="subunit">
    <text evidence="1">Homotetramer.</text>
</comment>
<comment type="similarity">
    <text evidence="1">Belongs to the chorismate synthase family.</text>
</comment>
<sequence length="362" mass="39288">MGNTFGSLFRITTFGESHGGGVGVIIDGCPPRLEISPEEIQVDLDRRRPGQSKITTPRKEADQCEILSGVFEGKTLGTPIAILVRNKDARSQDYNEMAVKYRPSHADATYEAKYGIRNWQGGGRSSARETIGRVAAGAIAKKILAQFNGVEIVAYVKSIQDIEATVDSNTVTLEQVESNIVRCPDEECAEKMIERIDQVLRQKDSIGGVVECAIRNAPKGLGEPVFDKLEADLAKAMMSLPATKGFEFGSGFAGTLLTGSQHNDEYYLDEAGEWRTRTNRSGGVQGGISNGEPIIMRIAFKPTATIGQEQKTVSNIGEETTLAAKGRHDPCVLPRAVPMVEAMAALVLCDHLLRFQAQCKTL</sequence>
<protein>
    <recommendedName>
        <fullName evidence="1">Chorismate synthase</fullName>
        <shortName evidence="1">CS</shortName>
        <ecNumber evidence="1">4.2.3.5</ecNumber>
    </recommendedName>
    <alternativeName>
        <fullName evidence="1">5-enolpyruvylshikimate-3-phosphate phospholyase</fullName>
    </alternativeName>
</protein>
<feature type="chain" id="PRO_0000140667" description="Chorismate synthase">
    <location>
        <begin position="1"/>
        <end position="362"/>
    </location>
</feature>
<feature type="binding site" evidence="1">
    <location>
        <position position="47"/>
    </location>
    <ligand>
        <name>NADP(+)</name>
        <dbReference type="ChEBI" id="CHEBI:58349"/>
    </ligand>
</feature>
<feature type="binding site" evidence="1">
    <location>
        <begin position="124"/>
        <end position="126"/>
    </location>
    <ligand>
        <name>FMN</name>
        <dbReference type="ChEBI" id="CHEBI:58210"/>
    </ligand>
</feature>
<feature type="binding site" evidence="1">
    <location>
        <position position="286"/>
    </location>
    <ligand>
        <name>FMN</name>
        <dbReference type="ChEBI" id="CHEBI:58210"/>
    </ligand>
</feature>
<feature type="binding site" evidence="1">
    <location>
        <begin position="301"/>
        <end position="305"/>
    </location>
    <ligand>
        <name>FMN</name>
        <dbReference type="ChEBI" id="CHEBI:58210"/>
    </ligand>
</feature>
<feature type="binding site" evidence="1">
    <location>
        <position position="327"/>
    </location>
    <ligand>
        <name>FMN</name>
        <dbReference type="ChEBI" id="CHEBI:58210"/>
    </ligand>
</feature>
<name>AROC_SYNY3</name>
<reference key="1">
    <citation type="journal article" date="1993" name="J. Biol. Chem.">
        <title>A novel operon organization involving the genes for chorismate synthase (aromatic biosynthesis pathway) and ribosomal GTPase center proteins (L11, L1, L10, L12: rplKAJL) in cyanobacterium Synechocystis PCC 6803.</title>
        <authorList>
            <person name="Schmidt J."/>
            <person name="Bubunenko M."/>
            <person name="Subramanian A.R."/>
        </authorList>
    </citation>
    <scope>NUCLEOTIDE SEQUENCE [GENOMIC DNA]</scope>
</reference>
<reference key="2">
    <citation type="journal article" date="1996" name="DNA Res.">
        <title>Sequence analysis of the genome of the unicellular cyanobacterium Synechocystis sp. strain PCC6803. II. Sequence determination of the entire genome and assignment of potential protein-coding regions.</title>
        <authorList>
            <person name="Kaneko T."/>
            <person name="Sato S."/>
            <person name="Kotani H."/>
            <person name="Tanaka A."/>
            <person name="Asamizu E."/>
            <person name="Nakamura Y."/>
            <person name="Miyajima N."/>
            <person name="Hirosawa M."/>
            <person name="Sugiura M."/>
            <person name="Sasamoto S."/>
            <person name="Kimura T."/>
            <person name="Hosouchi T."/>
            <person name="Matsuno A."/>
            <person name="Muraki A."/>
            <person name="Nakazaki N."/>
            <person name="Naruo K."/>
            <person name="Okumura S."/>
            <person name="Shimpo S."/>
            <person name="Takeuchi C."/>
            <person name="Wada T."/>
            <person name="Watanabe A."/>
            <person name="Yamada M."/>
            <person name="Yasuda M."/>
            <person name="Tabata S."/>
        </authorList>
    </citation>
    <scope>NUCLEOTIDE SEQUENCE [LARGE SCALE GENOMIC DNA]</scope>
    <source>
        <strain>ATCC 27184 / PCC 6803 / Kazusa</strain>
    </source>
</reference>
<reference key="3">
    <citation type="journal article" date="1990" name="Biochim. Biophys. Acta">
        <title>Cloning and characterization of the genes for ribosomal proteins L10 and L12 from Synechocystis Sp. PCC 6803: comparison of gene clustering pattern and protein sequence homology between cyanobacteria and chloroplasts.</title>
        <authorList>
            <person name="Sibold C."/>
            <person name="Subramanian A.R."/>
        </authorList>
    </citation>
    <scope>NUCLEOTIDE SEQUENCE [GENOMIC DNA] OF 1-138</scope>
</reference>
<dbReference type="EC" id="4.2.3.5" evidence="1"/>
<dbReference type="EMBL" id="X67516">
    <property type="protein sequence ID" value="CAA47855.1"/>
    <property type="molecule type" value="Genomic_DNA"/>
</dbReference>
<dbReference type="EMBL" id="BA000022">
    <property type="protein sequence ID" value="BAA17415.1"/>
    <property type="molecule type" value="Genomic_DNA"/>
</dbReference>
<dbReference type="EMBL" id="X53178">
    <property type="protein sequence ID" value="CAA37319.1"/>
    <property type="molecule type" value="Genomic_DNA"/>
</dbReference>
<dbReference type="PIR" id="A49316">
    <property type="entry name" value="A49316"/>
</dbReference>
<dbReference type="SMR" id="P23353"/>
<dbReference type="FunCoup" id="P23353">
    <property type="interactions" value="439"/>
</dbReference>
<dbReference type="STRING" id="1148.gene:10498278"/>
<dbReference type="PaxDb" id="1148-1652494"/>
<dbReference type="EnsemblBacteria" id="BAA17415">
    <property type="protein sequence ID" value="BAA17415"/>
    <property type="gene ID" value="BAA17415"/>
</dbReference>
<dbReference type="KEGG" id="syn:sll1747"/>
<dbReference type="eggNOG" id="COG0082">
    <property type="taxonomic scope" value="Bacteria"/>
</dbReference>
<dbReference type="InParanoid" id="P23353"/>
<dbReference type="PhylomeDB" id="P23353"/>
<dbReference type="UniPathway" id="UPA00053">
    <property type="reaction ID" value="UER00090"/>
</dbReference>
<dbReference type="Proteomes" id="UP000001425">
    <property type="component" value="Chromosome"/>
</dbReference>
<dbReference type="GO" id="GO:0005829">
    <property type="term" value="C:cytosol"/>
    <property type="evidence" value="ECO:0000318"/>
    <property type="project" value="GO_Central"/>
</dbReference>
<dbReference type="GO" id="GO:0004107">
    <property type="term" value="F:chorismate synthase activity"/>
    <property type="evidence" value="ECO:0000318"/>
    <property type="project" value="GO_Central"/>
</dbReference>
<dbReference type="GO" id="GO:0010181">
    <property type="term" value="F:FMN binding"/>
    <property type="evidence" value="ECO:0000318"/>
    <property type="project" value="GO_Central"/>
</dbReference>
<dbReference type="GO" id="GO:0008652">
    <property type="term" value="P:amino acid biosynthetic process"/>
    <property type="evidence" value="ECO:0007669"/>
    <property type="project" value="UniProtKB-KW"/>
</dbReference>
<dbReference type="GO" id="GO:0009073">
    <property type="term" value="P:aromatic amino acid family biosynthetic process"/>
    <property type="evidence" value="ECO:0000318"/>
    <property type="project" value="GO_Central"/>
</dbReference>
<dbReference type="GO" id="GO:0009423">
    <property type="term" value="P:chorismate biosynthetic process"/>
    <property type="evidence" value="ECO:0000318"/>
    <property type="project" value="GO_Central"/>
</dbReference>
<dbReference type="CDD" id="cd07304">
    <property type="entry name" value="Chorismate_synthase"/>
    <property type="match status" value="1"/>
</dbReference>
<dbReference type="FunFam" id="3.60.150.10:FF:000003">
    <property type="entry name" value="Chorismate synthase"/>
    <property type="match status" value="1"/>
</dbReference>
<dbReference type="Gene3D" id="3.60.150.10">
    <property type="entry name" value="Chorismate synthase AroC"/>
    <property type="match status" value="1"/>
</dbReference>
<dbReference type="HAMAP" id="MF_00300">
    <property type="entry name" value="Chorismate_synth"/>
    <property type="match status" value="1"/>
</dbReference>
<dbReference type="InterPro" id="IPR000453">
    <property type="entry name" value="Chorismate_synth"/>
</dbReference>
<dbReference type="InterPro" id="IPR035904">
    <property type="entry name" value="Chorismate_synth_AroC_sf"/>
</dbReference>
<dbReference type="InterPro" id="IPR020541">
    <property type="entry name" value="Chorismate_synthase_CS"/>
</dbReference>
<dbReference type="NCBIfam" id="TIGR00033">
    <property type="entry name" value="aroC"/>
    <property type="match status" value="1"/>
</dbReference>
<dbReference type="NCBIfam" id="NF003793">
    <property type="entry name" value="PRK05382.1"/>
    <property type="match status" value="1"/>
</dbReference>
<dbReference type="PANTHER" id="PTHR21085">
    <property type="entry name" value="CHORISMATE SYNTHASE"/>
    <property type="match status" value="1"/>
</dbReference>
<dbReference type="PANTHER" id="PTHR21085:SF0">
    <property type="entry name" value="CHORISMATE SYNTHASE"/>
    <property type="match status" value="1"/>
</dbReference>
<dbReference type="Pfam" id="PF01264">
    <property type="entry name" value="Chorismate_synt"/>
    <property type="match status" value="1"/>
</dbReference>
<dbReference type="PIRSF" id="PIRSF001456">
    <property type="entry name" value="Chorismate_synth"/>
    <property type="match status" value="1"/>
</dbReference>
<dbReference type="SUPFAM" id="SSF103263">
    <property type="entry name" value="Chorismate synthase, AroC"/>
    <property type="match status" value="1"/>
</dbReference>
<dbReference type="PROSITE" id="PS00787">
    <property type="entry name" value="CHORISMATE_SYNTHASE_1"/>
    <property type="match status" value="1"/>
</dbReference>
<dbReference type="PROSITE" id="PS00788">
    <property type="entry name" value="CHORISMATE_SYNTHASE_2"/>
    <property type="match status" value="1"/>
</dbReference>
<dbReference type="PROSITE" id="PS00789">
    <property type="entry name" value="CHORISMATE_SYNTHASE_3"/>
    <property type="match status" value="1"/>
</dbReference>
<proteinExistence type="inferred from homology"/>
<gene>
    <name evidence="1" type="primary">aroC</name>
    <name type="ordered locus">sll1747</name>
</gene>
<keyword id="KW-0028">Amino-acid biosynthesis</keyword>
<keyword id="KW-0057">Aromatic amino acid biosynthesis</keyword>
<keyword id="KW-0274">FAD</keyword>
<keyword id="KW-0285">Flavoprotein</keyword>
<keyword id="KW-0288">FMN</keyword>
<keyword id="KW-0456">Lyase</keyword>
<keyword id="KW-0521">NADP</keyword>
<keyword id="KW-1185">Reference proteome</keyword>
<organism>
    <name type="scientific">Synechocystis sp. (strain ATCC 27184 / PCC 6803 / Kazusa)</name>
    <dbReference type="NCBI Taxonomy" id="1111708"/>
    <lineage>
        <taxon>Bacteria</taxon>
        <taxon>Bacillati</taxon>
        <taxon>Cyanobacteriota</taxon>
        <taxon>Cyanophyceae</taxon>
        <taxon>Synechococcales</taxon>
        <taxon>Merismopediaceae</taxon>
        <taxon>Synechocystis</taxon>
    </lineage>
</organism>